<protein>
    <recommendedName>
        <fullName evidence="1">Small ribosomal subunit protein uS2</fullName>
    </recommendedName>
    <alternativeName>
        <fullName evidence="3">30S ribosomal protein S2</fullName>
    </alternativeName>
</protein>
<comment type="similarity">
    <text evidence="1">Belongs to the universal ribosomal protein uS2 family.</text>
</comment>
<evidence type="ECO:0000255" key="1">
    <source>
        <dbReference type="HAMAP-Rule" id="MF_00291"/>
    </source>
</evidence>
<evidence type="ECO:0000256" key="2">
    <source>
        <dbReference type="SAM" id="MobiDB-lite"/>
    </source>
</evidence>
<evidence type="ECO:0000305" key="3"/>
<keyword id="KW-0687">Ribonucleoprotein</keyword>
<keyword id="KW-0689">Ribosomal protein</keyword>
<gene>
    <name evidence="1" type="primary">rpsB</name>
    <name type="ordered locus">BLD_0403</name>
</gene>
<reference key="1">
    <citation type="journal article" date="2008" name="BMC Genomics">
        <title>Comparative genomic analysis of the gut bacterium Bifidobacterium longum reveals loci susceptible to deletion during pure culture growth.</title>
        <authorList>
            <person name="Lee J.H."/>
            <person name="Karamychev V.N."/>
            <person name="Kozyavkin S.A."/>
            <person name="Mills D."/>
            <person name="Pavlov A.R."/>
            <person name="Pavlova N.V."/>
            <person name="Polouchine N.N."/>
            <person name="Richardson P.M."/>
            <person name="Shakhova V.V."/>
            <person name="Slesarev A.I."/>
            <person name="Weimer B."/>
            <person name="O'Sullivan D.J."/>
        </authorList>
    </citation>
    <scope>NUCLEOTIDE SEQUENCE [LARGE SCALE GENOMIC DNA]</scope>
    <source>
        <strain>DJO10A</strain>
    </source>
</reference>
<name>RS2_BIFLD</name>
<accession>B3DRT0</accession>
<dbReference type="EMBL" id="CP000605">
    <property type="protein sequence ID" value="ACD97849.1"/>
    <property type="molecule type" value="Genomic_DNA"/>
</dbReference>
<dbReference type="RefSeq" id="WP_007056702.1">
    <property type="nucleotide sequence ID" value="NC_010816.1"/>
</dbReference>
<dbReference type="SMR" id="B3DRT0"/>
<dbReference type="GeneID" id="69578357"/>
<dbReference type="KEGG" id="blj:BLD_0403"/>
<dbReference type="HOGENOM" id="CLU_040318_2_3_11"/>
<dbReference type="Proteomes" id="UP000002419">
    <property type="component" value="Chromosome"/>
</dbReference>
<dbReference type="GO" id="GO:0022627">
    <property type="term" value="C:cytosolic small ribosomal subunit"/>
    <property type="evidence" value="ECO:0007669"/>
    <property type="project" value="TreeGrafter"/>
</dbReference>
<dbReference type="GO" id="GO:0003735">
    <property type="term" value="F:structural constituent of ribosome"/>
    <property type="evidence" value="ECO:0007669"/>
    <property type="project" value="InterPro"/>
</dbReference>
<dbReference type="GO" id="GO:0006412">
    <property type="term" value="P:translation"/>
    <property type="evidence" value="ECO:0007669"/>
    <property type="project" value="UniProtKB-UniRule"/>
</dbReference>
<dbReference type="CDD" id="cd01425">
    <property type="entry name" value="RPS2"/>
    <property type="match status" value="1"/>
</dbReference>
<dbReference type="FunFam" id="1.10.287.610:FF:000001">
    <property type="entry name" value="30S ribosomal protein S2"/>
    <property type="match status" value="1"/>
</dbReference>
<dbReference type="Gene3D" id="3.40.50.10490">
    <property type="entry name" value="Glucose-6-phosphate isomerase like protein, domain 1"/>
    <property type="match status" value="1"/>
</dbReference>
<dbReference type="Gene3D" id="1.10.287.610">
    <property type="entry name" value="Helix hairpin bin"/>
    <property type="match status" value="1"/>
</dbReference>
<dbReference type="HAMAP" id="MF_00291_B">
    <property type="entry name" value="Ribosomal_uS2_B"/>
    <property type="match status" value="1"/>
</dbReference>
<dbReference type="InterPro" id="IPR001865">
    <property type="entry name" value="Ribosomal_uS2"/>
</dbReference>
<dbReference type="InterPro" id="IPR005706">
    <property type="entry name" value="Ribosomal_uS2_bac/mit/plastid"/>
</dbReference>
<dbReference type="InterPro" id="IPR018130">
    <property type="entry name" value="Ribosomal_uS2_CS"/>
</dbReference>
<dbReference type="InterPro" id="IPR023591">
    <property type="entry name" value="Ribosomal_uS2_flav_dom_sf"/>
</dbReference>
<dbReference type="NCBIfam" id="TIGR01011">
    <property type="entry name" value="rpsB_bact"/>
    <property type="match status" value="1"/>
</dbReference>
<dbReference type="PANTHER" id="PTHR12534">
    <property type="entry name" value="30S RIBOSOMAL PROTEIN S2 PROKARYOTIC AND ORGANELLAR"/>
    <property type="match status" value="1"/>
</dbReference>
<dbReference type="PANTHER" id="PTHR12534:SF0">
    <property type="entry name" value="SMALL RIBOSOMAL SUBUNIT PROTEIN US2M"/>
    <property type="match status" value="1"/>
</dbReference>
<dbReference type="Pfam" id="PF00318">
    <property type="entry name" value="Ribosomal_S2"/>
    <property type="match status" value="1"/>
</dbReference>
<dbReference type="PRINTS" id="PR00395">
    <property type="entry name" value="RIBOSOMALS2"/>
</dbReference>
<dbReference type="SUPFAM" id="SSF52313">
    <property type="entry name" value="Ribosomal protein S2"/>
    <property type="match status" value="1"/>
</dbReference>
<dbReference type="PROSITE" id="PS00962">
    <property type="entry name" value="RIBOSOMAL_S2_1"/>
    <property type="match status" value="1"/>
</dbReference>
<dbReference type="PROSITE" id="PS00963">
    <property type="entry name" value="RIBOSOMAL_S2_2"/>
    <property type="match status" value="1"/>
</dbReference>
<proteinExistence type="inferred from homology"/>
<feature type="chain" id="PRO_1000114992" description="Small ribosomal subunit protein uS2">
    <location>
        <begin position="1"/>
        <end position="281"/>
    </location>
</feature>
<feature type="region of interest" description="Disordered" evidence="2">
    <location>
        <begin position="233"/>
        <end position="281"/>
    </location>
</feature>
<feature type="compositionally biased region" description="Low complexity" evidence="2">
    <location>
        <begin position="255"/>
        <end position="275"/>
    </location>
</feature>
<organism>
    <name type="scientific">Bifidobacterium longum (strain DJO10A)</name>
    <dbReference type="NCBI Taxonomy" id="205913"/>
    <lineage>
        <taxon>Bacteria</taxon>
        <taxon>Bacillati</taxon>
        <taxon>Actinomycetota</taxon>
        <taxon>Actinomycetes</taxon>
        <taxon>Bifidobacteriales</taxon>
        <taxon>Bifidobacteriaceae</taxon>
        <taxon>Bifidobacterium</taxon>
    </lineage>
</organism>
<sequence>MAQITMSDMLKAGLHFGHQTRRWNPKMKQFILTQRNGIHIINLFKSLDMIDKAYDFIKTTVAHNGTVLFVGTKKQAQEAIANQATRVNMPYVSERWLGGMLTNFQTVSKRVNRLKELEEMDFTDVHGSGLTKKELLLLEREKDKLNKQLGGIRNMNRTPSAMFVVDITKEALAVEEAHKLGIPVVAIVDTNADPDTVEYPIPANDDAIRGIELLTSLMADAVAEGLLERSGANKAEGEAAEQPMAAWEKELLTNEAPAEASAEAAAPAAAEGETAEAPKAE</sequence>